<keyword id="KW-0169">Cobalamin biosynthesis</keyword>
<keyword id="KW-0328">Glycosyltransferase</keyword>
<keyword id="KW-0808">Transferase</keyword>
<feature type="chain" id="PRO_1000100473" description="Nicotinate-nucleotide--dimethylbenzimidazole phosphoribosyltransferase">
    <location>
        <begin position="1"/>
        <end position="356"/>
    </location>
</feature>
<feature type="active site" description="Proton acceptor" evidence="1">
    <location>
        <position position="317"/>
    </location>
</feature>
<evidence type="ECO:0000255" key="1">
    <source>
        <dbReference type="HAMAP-Rule" id="MF_00230"/>
    </source>
</evidence>
<name>COBT_SALA4</name>
<gene>
    <name evidence="1" type="primary">cobT</name>
    <name type="ordered locus">SeAg_B2138</name>
</gene>
<protein>
    <recommendedName>
        <fullName evidence="1">Nicotinate-nucleotide--dimethylbenzimidazole phosphoribosyltransferase</fullName>
        <shortName evidence="1">NN:DBI PRT</shortName>
        <ecNumber evidence="1">2.4.2.21</ecNumber>
    </recommendedName>
    <alternativeName>
        <fullName evidence="1">N(1)-alpha-phosphoribosyltransferase</fullName>
    </alternativeName>
</protein>
<reference key="1">
    <citation type="journal article" date="2011" name="J. Bacteriol.">
        <title>Comparative genomics of 28 Salmonella enterica isolates: evidence for CRISPR-mediated adaptive sublineage evolution.</title>
        <authorList>
            <person name="Fricke W.F."/>
            <person name="Mammel M.K."/>
            <person name="McDermott P.F."/>
            <person name="Tartera C."/>
            <person name="White D.G."/>
            <person name="Leclerc J.E."/>
            <person name="Ravel J."/>
            <person name="Cebula T.A."/>
        </authorList>
    </citation>
    <scope>NUCLEOTIDE SEQUENCE [LARGE SCALE GENOMIC DNA]</scope>
    <source>
        <strain>SL483</strain>
    </source>
</reference>
<proteinExistence type="inferred from homology"/>
<dbReference type="EC" id="2.4.2.21" evidence="1"/>
<dbReference type="EMBL" id="CP001138">
    <property type="protein sequence ID" value="ACH50599.1"/>
    <property type="molecule type" value="Genomic_DNA"/>
</dbReference>
<dbReference type="RefSeq" id="WP_001193986.1">
    <property type="nucleotide sequence ID" value="NC_011149.1"/>
</dbReference>
<dbReference type="SMR" id="B5EWY2"/>
<dbReference type="KEGG" id="sea:SeAg_B2138"/>
<dbReference type="HOGENOM" id="CLU_002982_0_0_6"/>
<dbReference type="UniPathway" id="UPA00061">
    <property type="reaction ID" value="UER00516"/>
</dbReference>
<dbReference type="Proteomes" id="UP000008819">
    <property type="component" value="Chromosome"/>
</dbReference>
<dbReference type="GO" id="GO:0008939">
    <property type="term" value="F:nicotinate-nucleotide-dimethylbenzimidazole phosphoribosyltransferase activity"/>
    <property type="evidence" value="ECO:0007669"/>
    <property type="project" value="UniProtKB-UniRule"/>
</dbReference>
<dbReference type="GO" id="GO:0009236">
    <property type="term" value="P:cobalamin biosynthetic process"/>
    <property type="evidence" value="ECO:0007669"/>
    <property type="project" value="UniProtKB-KW"/>
</dbReference>
<dbReference type="CDD" id="cd02439">
    <property type="entry name" value="DMB-PRT_CobT"/>
    <property type="match status" value="1"/>
</dbReference>
<dbReference type="FunFam" id="1.10.1610.10:FF:000001">
    <property type="entry name" value="Nicotinate-nucleotide--dimethylbenzimidazole phosphoribosyltransferase"/>
    <property type="match status" value="1"/>
</dbReference>
<dbReference type="FunFam" id="3.40.50.10210:FF:000001">
    <property type="entry name" value="Nicotinate-nucleotide--dimethylbenzimidazole phosphoribosyltransferase"/>
    <property type="match status" value="1"/>
</dbReference>
<dbReference type="Gene3D" id="1.10.1610.10">
    <property type="match status" value="1"/>
</dbReference>
<dbReference type="Gene3D" id="3.40.50.10210">
    <property type="match status" value="1"/>
</dbReference>
<dbReference type="HAMAP" id="MF_00230">
    <property type="entry name" value="CobT"/>
    <property type="match status" value="1"/>
</dbReference>
<dbReference type="InterPro" id="IPR003200">
    <property type="entry name" value="Nict_dMeBzImd_PRibTrfase"/>
</dbReference>
<dbReference type="InterPro" id="IPR017846">
    <property type="entry name" value="Nict_dMeBzImd_PRibTrfase_bact"/>
</dbReference>
<dbReference type="InterPro" id="IPR023195">
    <property type="entry name" value="Nict_dMeBzImd_PRibTrfase_N"/>
</dbReference>
<dbReference type="InterPro" id="IPR036087">
    <property type="entry name" value="Nict_dMeBzImd_PRibTrfase_sf"/>
</dbReference>
<dbReference type="NCBIfam" id="TIGR03160">
    <property type="entry name" value="cobT_DBIPRT"/>
    <property type="match status" value="1"/>
</dbReference>
<dbReference type="NCBIfam" id="NF000996">
    <property type="entry name" value="PRK00105.1"/>
    <property type="match status" value="1"/>
</dbReference>
<dbReference type="PANTHER" id="PTHR43463">
    <property type="entry name" value="NICOTINATE-NUCLEOTIDE--DIMETHYLBENZIMIDAZOLE PHOSPHORIBOSYLTRANSFERASE"/>
    <property type="match status" value="1"/>
</dbReference>
<dbReference type="PANTHER" id="PTHR43463:SF1">
    <property type="entry name" value="NICOTINATE-NUCLEOTIDE--DIMETHYLBENZIMIDAZOLE PHOSPHORIBOSYLTRANSFERASE"/>
    <property type="match status" value="1"/>
</dbReference>
<dbReference type="Pfam" id="PF02277">
    <property type="entry name" value="DBI_PRT"/>
    <property type="match status" value="1"/>
</dbReference>
<dbReference type="SUPFAM" id="SSF52733">
    <property type="entry name" value="Nicotinate mononucleotide:5,6-dimethylbenzimidazole phosphoribosyltransferase (CobT)"/>
    <property type="match status" value="1"/>
</dbReference>
<organism>
    <name type="scientific">Salmonella agona (strain SL483)</name>
    <dbReference type="NCBI Taxonomy" id="454166"/>
    <lineage>
        <taxon>Bacteria</taxon>
        <taxon>Pseudomonadati</taxon>
        <taxon>Pseudomonadota</taxon>
        <taxon>Gammaproteobacteria</taxon>
        <taxon>Enterobacterales</taxon>
        <taxon>Enterobacteriaceae</taxon>
        <taxon>Salmonella</taxon>
    </lineage>
</organism>
<sequence>MQTLHALLRDIPAPDAEAMARAQQHIDGLLKPPGSLGRLETLAVQLAGMPGLNGTPQVGEKAVLVMCADHGVWDEGVAVSPKIVTAIQAANMTRGTTGVCVLAAQAGAKVYVIDVGIDAEPIPGVVDMRVARGCGNIAVGPAMSRSQAEALLLEVSRYTCDLAQRGVTLFGVGELGMANTTPAAAMVSVFTGSDAKEVVGIGANLPPSRIDNKVDVVRRAIAINQPNPRDGIDVLSKVGGFDLVGMTGVILGAARCGLPVLLDGFLSYSAALAACQIAPAVRPYLIPSHFSAEKGARIALAHLSMEPYLHMAMRLGEGSGAALAMPIVEAACAMFHNMGELAASNIVLPEGNANAT</sequence>
<comment type="function">
    <text evidence="1">Catalyzes the synthesis of alpha-ribazole-5'-phosphate from nicotinate mononucleotide (NAMN) and 5,6-dimethylbenzimidazole (DMB).</text>
</comment>
<comment type="catalytic activity">
    <reaction evidence="1">
        <text>5,6-dimethylbenzimidazole + nicotinate beta-D-ribonucleotide = alpha-ribazole 5'-phosphate + nicotinate + H(+)</text>
        <dbReference type="Rhea" id="RHEA:11196"/>
        <dbReference type="ChEBI" id="CHEBI:15378"/>
        <dbReference type="ChEBI" id="CHEBI:15890"/>
        <dbReference type="ChEBI" id="CHEBI:32544"/>
        <dbReference type="ChEBI" id="CHEBI:57502"/>
        <dbReference type="ChEBI" id="CHEBI:57918"/>
        <dbReference type="EC" id="2.4.2.21"/>
    </reaction>
</comment>
<comment type="pathway">
    <text evidence="1">Nucleoside biosynthesis; alpha-ribazole biosynthesis; alpha-ribazole from 5,6-dimethylbenzimidazole: step 1/2.</text>
</comment>
<comment type="subunit">
    <text evidence="1">Homodimer.</text>
</comment>
<comment type="similarity">
    <text evidence="1">Belongs to the CobT family.</text>
</comment>
<accession>B5EWY2</accession>